<feature type="chain" id="PRO_0000049978" description="Uncharacterized protein YwjG">
    <location>
        <begin position="1"/>
        <end position="173"/>
    </location>
</feature>
<gene>
    <name type="primary">ywjG</name>
    <name type="ordered locus">BSU37140</name>
</gene>
<reference key="1">
    <citation type="journal article" date="1983" name="Proc. Natl. Acad. Sci. U.S.A.">
        <title>Early sporulation gene spo0F: nucleotide sequence and analysis of gene product.</title>
        <authorList>
            <person name="Shimotsu H."/>
            <person name="Kawamura F."/>
            <person name="Kobayashi Y."/>
            <person name="Saito H."/>
        </authorList>
    </citation>
    <scope>NUCLEOTIDE SEQUENCE [GENOMIC DNA]</scope>
    <source>
        <strain>168 / JH649</strain>
    </source>
</reference>
<reference key="2">
    <citation type="journal article" date="1997" name="Microbiology">
        <title>The Bacillus subtilis genome from gerBC (311 degrees) to licR (334 degrees).</title>
        <authorList>
            <person name="Presecan E."/>
            <person name="Moszer I."/>
            <person name="Boursier L."/>
            <person name="Cruz Ramos H."/>
            <person name="De La Fuente V."/>
            <person name="Hullo M.-F."/>
            <person name="Lelong C."/>
            <person name="Schleich S."/>
            <person name="Sekowska A."/>
            <person name="Song B.H."/>
            <person name="Villani G."/>
            <person name="Kunst F."/>
            <person name="Danchin A."/>
            <person name="Glaser P."/>
        </authorList>
    </citation>
    <scope>NUCLEOTIDE SEQUENCE [GENOMIC DNA]</scope>
    <source>
        <strain>168</strain>
    </source>
</reference>
<reference key="3">
    <citation type="journal article" date="1997" name="Nature">
        <title>The complete genome sequence of the Gram-positive bacterium Bacillus subtilis.</title>
        <authorList>
            <person name="Kunst F."/>
            <person name="Ogasawara N."/>
            <person name="Moszer I."/>
            <person name="Albertini A.M."/>
            <person name="Alloni G."/>
            <person name="Azevedo V."/>
            <person name="Bertero M.G."/>
            <person name="Bessieres P."/>
            <person name="Bolotin A."/>
            <person name="Borchert S."/>
            <person name="Borriss R."/>
            <person name="Boursier L."/>
            <person name="Brans A."/>
            <person name="Braun M."/>
            <person name="Brignell S.C."/>
            <person name="Bron S."/>
            <person name="Brouillet S."/>
            <person name="Bruschi C.V."/>
            <person name="Caldwell B."/>
            <person name="Capuano V."/>
            <person name="Carter N.M."/>
            <person name="Choi S.-K."/>
            <person name="Codani J.-J."/>
            <person name="Connerton I.F."/>
            <person name="Cummings N.J."/>
            <person name="Daniel R.A."/>
            <person name="Denizot F."/>
            <person name="Devine K.M."/>
            <person name="Duesterhoeft A."/>
            <person name="Ehrlich S.D."/>
            <person name="Emmerson P.T."/>
            <person name="Entian K.-D."/>
            <person name="Errington J."/>
            <person name="Fabret C."/>
            <person name="Ferrari E."/>
            <person name="Foulger D."/>
            <person name="Fritz C."/>
            <person name="Fujita M."/>
            <person name="Fujita Y."/>
            <person name="Fuma S."/>
            <person name="Galizzi A."/>
            <person name="Galleron N."/>
            <person name="Ghim S.-Y."/>
            <person name="Glaser P."/>
            <person name="Goffeau A."/>
            <person name="Golightly E.J."/>
            <person name="Grandi G."/>
            <person name="Guiseppi G."/>
            <person name="Guy B.J."/>
            <person name="Haga K."/>
            <person name="Haiech J."/>
            <person name="Harwood C.R."/>
            <person name="Henaut A."/>
            <person name="Hilbert H."/>
            <person name="Holsappel S."/>
            <person name="Hosono S."/>
            <person name="Hullo M.-F."/>
            <person name="Itaya M."/>
            <person name="Jones L.-M."/>
            <person name="Joris B."/>
            <person name="Karamata D."/>
            <person name="Kasahara Y."/>
            <person name="Klaerr-Blanchard M."/>
            <person name="Klein C."/>
            <person name="Kobayashi Y."/>
            <person name="Koetter P."/>
            <person name="Koningstein G."/>
            <person name="Krogh S."/>
            <person name="Kumano M."/>
            <person name="Kurita K."/>
            <person name="Lapidus A."/>
            <person name="Lardinois S."/>
            <person name="Lauber J."/>
            <person name="Lazarevic V."/>
            <person name="Lee S.-M."/>
            <person name="Levine A."/>
            <person name="Liu H."/>
            <person name="Masuda S."/>
            <person name="Mauel C."/>
            <person name="Medigue C."/>
            <person name="Medina N."/>
            <person name="Mellado R.P."/>
            <person name="Mizuno M."/>
            <person name="Moestl D."/>
            <person name="Nakai S."/>
            <person name="Noback M."/>
            <person name="Noone D."/>
            <person name="O'Reilly M."/>
            <person name="Ogawa K."/>
            <person name="Ogiwara A."/>
            <person name="Oudega B."/>
            <person name="Park S.-H."/>
            <person name="Parro V."/>
            <person name="Pohl T.M."/>
            <person name="Portetelle D."/>
            <person name="Porwollik S."/>
            <person name="Prescott A.M."/>
            <person name="Presecan E."/>
            <person name="Pujic P."/>
            <person name="Purnelle B."/>
            <person name="Rapoport G."/>
            <person name="Rey M."/>
            <person name="Reynolds S."/>
            <person name="Rieger M."/>
            <person name="Rivolta C."/>
            <person name="Rocha E."/>
            <person name="Roche B."/>
            <person name="Rose M."/>
            <person name="Sadaie Y."/>
            <person name="Sato T."/>
            <person name="Scanlan E."/>
            <person name="Schleich S."/>
            <person name="Schroeter R."/>
            <person name="Scoffone F."/>
            <person name="Sekiguchi J."/>
            <person name="Sekowska A."/>
            <person name="Seror S.J."/>
            <person name="Serror P."/>
            <person name="Shin B.-S."/>
            <person name="Soldo B."/>
            <person name="Sorokin A."/>
            <person name="Tacconi E."/>
            <person name="Takagi T."/>
            <person name="Takahashi H."/>
            <person name="Takemaru K."/>
            <person name="Takeuchi M."/>
            <person name="Tamakoshi A."/>
            <person name="Tanaka T."/>
            <person name="Terpstra P."/>
            <person name="Tognoni A."/>
            <person name="Tosato V."/>
            <person name="Uchiyama S."/>
            <person name="Vandenbol M."/>
            <person name="Vannier F."/>
            <person name="Vassarotti A."/>
            <person name="Viari A."/>
            <person name="Wambutt R."/>
            <person name="Wedler E."/>
            <person name="Wedler H."/>
            <person name="Weitzenegger T."/>
            <person name="Winters P."/>
            <person name="Wipat A."/>
            <person name="Yamamoto H."/>
            <person name="Yamane K."/>
            <person name="Yasumoto K."/>
            <person name="Yata K."/>
            <person name="Yoshida K."/>
            <person name="Yoshikawa H.-F."/>
            <person name="Zumstein E."/>
            <person name="Yoshikawa H."/>
            <person name="Danchin A."/>
        </authorList>
    </citation>
    <scope>NUCLEOTIDE SEQUENCE [LARGE SCALE GENOMIC DNA]</scope>
    <source>
        <strain>168</strain>
    </source>
</reference>
<reference key="4">
    <citation type="journal article" date="1986" name="Nucleic Acids Res.">
        <title>Revised assignment for the Bacillus subtilis spo0F gene and its homology with spo0A and with two Escherichia coli genes.</title>
        <authorList>
            <person name="Yoshikawa H."/>
            <person name="Kazami J."/>
            <person name="Yamashita S."/>
            <person name="Chibazakura T."/>
            <person name="Sone H."/>
            <person name="Kawamura F."/>
            <person name="Oda M."/>
            <person name="Isaka M."/>
            <person name="Kobayashi Y."/>
            <person name="Saito H."/>
        </authorList>
    </citation>
    <scope>NUCLEOTIDE SEQUENCE [GENOMIC DNA] OF 1-27</scope>
</reference>
<evidence type="ECO:0000305" key="1">
    <source>
    </source>
</evidence>
<name>YWJG_BACSU</name>
<comment type="caution">
    <text evidence="1">Was originally thought to be the spo0F protein.</text>
</comment>
<sequence length="173" mass="19066">MLKIFTTQLTGIFSRIQDKESDAIEDGARLLAQAVISGHSIYLYGANELQGVFYEATESKEPFPSVKAFPENAEEVTESDRVLMFCSGTGTAEEQELAKELYEKGAGVVCVSPAAKDSAGIEQYCDVHIDSKLKMPLVPDEDGTRYGFPSLMTALYVYHALSFTLKEILQEYA</sequence>
<protein>
    <recommendedName>
        <fullName>Uncharacterized protein YwjG</fullName>
    </recommendedName>
</protein>
<dbReference type="EMBL" id="V00105">
    <property type="protein sequence ID" value="CAA23438.1"/>
    <property type="molecule type" value="Genomic_DNA"/>
</dbReference>
<dbReference type="EMBL" id="Z49782">
    <property type="protein sequence ID" value="CAA89871.1"/>
    <property type="molecule type" value="Genomic_DNA"/>
</dbReference>
<dbReference type="EMBL" id="AL009126">
    <property type="protein sequence ID" value="CAB15731.1"/>
    <property type="molecule type" value="Genomic_DNA"/>
</dbReference>
<dbReference type="EMBL" id="X03497">
    <property type="protein sequence ID" value="CAA27216.1"/>
    <property type="molecule type" value="Genomic_DNA"/>
</dbReference>
<dbReference type="PIR" id="I40471">
    <property type="entry name" value="I40471"/>
</dbReference>
<dbReference type="RefSeq" id="NP_391595.1">
    <property type="nucleotide sequence ID" value="NC_000964.3"/>
</dbReference>
<dbReference type="RefSeq" id="WP_003242809.1">
    <property type="nucleotide sequence ID" value="NZ_OZ025638.1"/>
</dbReference>
<dbReference type="SMR" id="P06629"/>
<dbReference type="FunCoup" id="P06629">
    <property type="interactions" value="36"/>
</dbReference>
<dbReference type="STRING" id="224308.BSU37140"/>
<dbReference type="TCDB" id="8.A.23.1.25">
    <property type="family name" value="the basigin (basigin) family"/>
</dbReference>
<dbReference type="PaxDb" id="224308-BSU37140"/>
<dbReference type="EnsemblBacteria" id="CAB15731">
    <property type="protein sequence ID" value="CAB15731"/>
    <property type="gene ID" value="BSU_37140"/>
</dbReference>
<dbReference type="GeneID" id="938459"/>
<dbReference type="KEGG" id="bsu:BSU37140"/>
<dbReference type="PATRIC" id="fig|224308.179.peg.4023"/>
<dbReference type="eggNOG" id="COG4821">
    <property type="taxonomic scope" value="Bacteria"/>
</dbReference>
<dbReference type="InParanoid" id="P06629"/>
<dbReference type="OrthoDB" id="2737584at2"/>
<dbReference type="BioCyc" id="BSUB:BSU37140-MONOMER"/>
<dbReference type="Proteomes" id="UP000001570">
    <property type="component" value="Chromosome"/>
</dbReference>
<dbReference type="GO" id="GO:0097367">
    <property type="term" value="F:carbohydrate derivative binding"/>
    <property type="evidence" value="ECO:0007669"/>
    <property type="project" value="InterPro"/>
</dbReference>
<dbReference type="GO" id="GO:1901135">
    <property type="term" value="P:carbohydrate derivative metabolic process"/>
    <property type="evidence" value="ECO:0007669"/>
    <property type="project" value="InterPro"/>
</dbReference>
<dbReference type="Gene3D" id="3.40.50.10490">
    <property type="entry name" value="Glucose-6-phosphate isomerase like protein, domain 1"/>
    <property type="match status" value="1"/>
</dbReference>
<dbReference type="InterPro" id="IPR019676">
    <property type="entry name" value="DUF2529"/>
</dbReference>
<dbReference type="InterPro" id="IPR046348">
    <property type="entry name" value="SIS_dom_sf"/>
</dbReference>
<dbReference type="Pfam" id="PF10740">
    <property type="entry name" value="DUF2529"/>
    <property type="match status" value="1"/>
</dbReference>
<dbReference type="SUPFAM" id="SSF53697">
    <property type="entry name" value="SIS domain"/>
    <property type="match status" value="1"/>
</dbReference>
<keyword id="KW-1185">Reference proteome</keyword>
<proteinExistence type="predicted"/>
<accession>P06629</accession>
<organism>
    <name type="scientific">Bacillus subtilis (strain 168)</name>
    <dbReference type="NCBI Taxonomy" id="224308"/>
    <lineage>
        <taxon>Bacteria</taxon>
        <taxon>Bacillati</taxon>
        <taxon>Bacillota</taxon>
        <taxon>Bacilli</taxon>
        <taxon>Bacillales</taxon>
        <taxon>Bacillaceae</taxon>
        <taxon>Bacillus</taxon>
    </lineage>
</organism>